<name>DLDH1_PSEAE</name>
<protein>
    <recommendedName>
        <fullName>Dihydrolipoyl dehydrogenase</fullName>
        <ecNumber>1.8.1.4</ecNumber>
    </recommendedName>
    <alternativeName>
        <fullName>Dihydrolipoamide dehydrogenase</fullName>
    </alternativeName>
    <alternativeName>
        <fullName>E3 component of branched-chain alpha-keto acid dehydrogenase complex</fullName>
    </alternativeName>
    <alternativeName>
        <fullName>LPD-Val</fullName>
    </alternativeName>
</protein>
<proteinExistence type="evidence at protein level"/>
<sequence>MSQILKTSLLIVGGGPGGYVAAIRAGQLGIPTVLVEGAALGGTCLNVGCIPSKALIHAAEEYLKARHYASRSALGIQVQAPSIDIARTVEWKDAIVDRLTSGVAALLKKHGVDVVQGWARILDGKSVAVELAGGGSQRIECEHLLLAAGSQSVELPILPLGGKVISSTEALAPGSLPKRLVVVGGGYIGLELGTAYRKLGVEVAVVEAQPRILPGYDEELTKPVAQALRRLGVELYLGHSLLGPSENGVRVRDGAGEEREIAADQVLVAVGRKPRSEGWNLESLGLDMNGRAVKVDDQCRTSMRNVWAIGDLAGEPMLAHRAMAQGEMVAELIAGKRRQFAPVAIPAVCFTDPEVVVAGLSPEQAKDAGLDCLVASFPFAANGRAMTLEANEGFVRVVARRDNHLVVGWQAVGKAVSELSTAFAQSLEMGARLEDIAGTIHAHPTLGEAVQEAALRALGHALHI</sequence>
<feature type="chain" id="PRO_0000068036" description="Dihydrolipoyl dehydrogenase">
    <location>
        <begin position="1"/>
        <end position="464"/>
    </location>
</feature>
<feature type="active site" description="Proton acceptor" evidence="2">
    <location>
        <position position="443"/>
    </location>
</feature>
<feature type="binding site" evidence="1">
    <location>
        <begin position="36"/>
        <end position="44"/>
    </location>
    <ligand>
        <name>FAD</name>
        <dbReference type="ChEBI" id="CHEBI:57692"/>
    </ligand>
</feature>
<feature type="binding site" evidence="1">
    <location>
        <position position="53"/>
    </location>
    <ligand>
        <name>FAD</name>
        <dbReference type="ChEBI" id="CHEBI:57692"/>
    </ligand>
</feature>
<feature type="binding site" evidence="1">
    <location>
        <position position="119"/>
    </location>
    <ligand>
        <name>FAD</name>
        <dbReference type="ChEBI" id="CHEBI:57692"/>
    </ligand>
</feature>
<feature type="binding site" evidence="1">
    <location>
        <begin position="184"/>
        <end position="188"/>
    </location>
    <ligand>
        <name>NAD(+)</name>
        <dbReference type="ChEBI" id="CHEBI:57540"/>
    </ligand>
</feature>
<feature type="binding site" evidence="1">
    <location>
        <position position="207"/>
    </location>
    <ligand>
        <name>NAD(+)</name>
        <dbReference type="ChEBI" id="CHEBI:57540"/>
    </ligand>
</feature>
<feature type="binding site" evidence="1">
    <location>
        <begin position="269"/>
        <end position="272"/>
    </location>
    <ligand>
        <name>NAD(+)</name>
        <dbReference type="ChEBI" id="CHEBI:57540"/>
    </ligand>
</feature>
<feature type="binding site" evidence="1">
    <location>
        <position position="311"/>
    </location>
    <ligand>
        <name>FAD</name>
        <dbReference type="ChEBI" id="CHEBI:57692"/>
    </ligand>
</feature>
<feature type="binding site" evidence="1">
    <location>
        <position position="319"/>
    </location>
    <ligand>
        <name>FAD</name>
        <dbReference type="ChEBI" id="CHEBI:57692"/>
    </ligand>
</feature>
<feature type="disulfide bond" description="Redox-active" evidence="2">
    <location>
        <begin position="44"/>
        <end position="49"/>
    </location>
</feature>
<keyword id="KW-0963">Cytoplasm</keyword>
<keyword id="KW-0903">Direct protein sequencing</keyword>
<keyword id="KW-1015">Disulfide bond</keyword>
<keyword id="KW-0274">FAD</keyword>
<keyword id="KW-0285">Flavoprotein</keyword>
<keyword id="KW-0520">NAD</keyword>
<keyword id="KW-0560">Oxidoreductase</keyword>
<keyword id="KW-0676">Redox-active center</keyword>
<keyword id="KW-1185">Reference proteome</keyword>
<reference key="1">
    <citation type="journal article" date="2000" name="Nature">
        <title>Complete genome sequence of Pseudomonas aeruginosa PAO1, an opportunistic pathogen.</title>
        <authorList>
            <person name="Stover C.K."/>
            <person name="Pham X.-Q.T."/>
            <person name="Erwin A.L."/>
            <person name="Mizoguchi S.D."/>
            <person name="Warrener P."/>
            <person name="Hickey M.J."/>
            <person name="Brinkman F.S.L."/>
            <person name="Hufnagle W.O."/>
            <person name="Kowalik D.J."/>
            <person name="Lagrou M."/>
            <person name="Garber R.L."/>
            <person name="Goltry L."/>
            <person name="Tolentino E."/>
            <person name="Westbrock-Wadman S."/>
            <person name="Yuan Y."/>
            <person name="Brody L.L."/>
            <person name="Coulter S.N."/>
            <person name="Folger K.R."/>
            <person name="Kas A."/>
            <person name="Larbig K."/>
            <person name="Lim R.M."/>
            <person name="Smith K.A."/>
            <person name="Spencer D.H."/>
            <person name="Wong G.K.-S."/>
            <person name="Wu Z."/>
            <person name="Paulsen I.T."/>
            <person name="Reizer J."/>
            <person name="Saier M.H. Jr."/>
            <person name="Hancock R.E.W."/>
            <person name="Lory S."/>
            <person name="Olson M.V."/>
        </authorList>
    </citation>
    <scope>NUCLEOTIDE SEQUENCE [LARGE SCALE GENOMIC DNA]</scope>
    <source>
        <strain>ATCC 15692 / DSM 22644 / CIP 104116 / JCM 14847 / LMG 12228 / 1C / PRS 101 / PAO1</strain>
    </source>
</reference>
<reference evidence="4" key="2">
    <citation type="thesis" date="2005" institute="Ben-Gurion University" country="Israel">
        <title>Biofouling in water treatment systems: effect of membrane properties on biofilm formation.</title>
        <authorList>
            <person name="Liddor M."/>
        </authorList>
    </citation>
    <scope>PROTEIN SEQUENCE OF 7-24; 54-64; 72-87; 99-108; 164-178; 199-211; 253-272; 305-336; 385-396 AND 415-456</scope>
    <source>
        <strain>ATCC 33467 / type 1 smooth</strain>
    </source>
</reference>
<evidence type="ECO:0000250" key="1"/>
<evidence type="ECO:0000250" key="2">
    <source>
        <dbReference type="UniProtKB" id="P18925"/>
    </source>
</evidence>
<evidence type="ECO:0000255" key="3"/>
<evidence type="ECO:0000305" key="4"/>
<evidence type="ECO:0000312" key="5">
    <source>
        <dbReference type="EMBL" id="AAG05638.1"/>
    </source>
</evidence>
<accession>Q9I1L9</accession>
<gene>
    <name evidence="5" type="primary">lpdV</name>
    <name type="ordered locus">PA2250</name>
</gene>
<dbReference type="EC" id="1.8.1.4"/>
<dbReference type="EMBL" id="AE004091">
    <property type="protein sequence ID" value="AAG05638.1"/>
    <property type="molecule type" value="Genomic_DNA"/>
</dbReference>
<dbReference type="PIR" id="F83365">
    <property type="entry name" value="F83365"/>
</dbReference>
<dbReference type="RefSeq" id="NP_250940.1">
    <property type="nucleotide sequence ID" value="NC_002516.2"/>
</dbReference>
<dbReference type="SMR" id="Q9I1L9"/>
<dbReference type="STRING" id="208964.PA2250"/>
<dbReference type="PaxDb" id="208964-PA2250"/>
<dbReference type="GeneID" id="878470"/>
<dbReference type="KEGG" id="pae:PA2250"/>
<dbReference type="PATRIC" id="fig|208964.12.peg.2351"/>
<dbReference type="PseudoCAP" id="PA2250"/>
<dbReference type="HOGENOM" id="CLU_016755_0_1_6"/>
<dbReference type="InParanoid" id="Q9I1L9"/>
<dbReference type="OrthoDB" id="9800167at2"/>
<dbReference type="PhylomeDB" id="Q9I1L9"/>
<dbReference type="BioCyc" id="PAER208964:G1FZ6-2289-MONOMER"/>
<dbReference type="Proteomes" id="UP000002438">
    <property type="component" value="Chromosome"/>
</dbReference>
<dbReference type="GO" id="GO:0005737">
    <property type="term" value="C:cytoplasm"/>
    <property type="evidence" value="ECO:0007669"/>
    <property type="project" value="UniProtKB-SubCell"/>
</dbReference>
<dbReference type="GO" id="GO:0004148">
    <property type="term" value="F:dihydrolipoyl dehydrogenase (NADH) activity"/>
    <property type="evidence" value="ECO:0000318"/>
    <property type="project" value="GO_Central"/>
</dbReference>
<dbReference type="GO" id="GO:0050660">
    <property type="term" value="F:flavin adenine dinucleotide binding"/>
    <property type="evidence" value="ECO:0000318"/>
    <property type="project" value="GO_Central"/>
</dbReference>
<dbReference type="GO" id="GO:0006103">
    <property type="term" value="P:2-oxoglutarate metabolic process"/>
    <property type="evidence" value="ECO:0000318"/>
    <property type="project" value="GO_Central"/>
</dbReference>
<dbReference type="GO" id="GO:0006090">
    <property type="term" value="P:pyruvate metabolic process"/>
    <property type="evidence" value="ECO:0000318"/>
    <property type="project" value="GO_Central"/>
</dbReference>
<dbReference type="FunFam" id="3.30.390.30:FF:000001">
    <property type="entry name" value="Dihydrolipoyl dehydrogenase"/>
    <property type="match status" value="1"/>
</dbReference>
<dbReference type="Gene3D" id="3.30.390.30">
    <property type="match status" value="1"/>
</dbReference>
<dbReference type="Gene3D" id="3.50.50.60">
    <property type="entry name" value="FAD/NAD(P)-binding domain"/>
    <property type="match status" value="2"/>
</dbReference>
<dbReference type="InterPro" id="IPR050151">
    <property type="entry name" value="Class-I_Pyr_Nuc-Dis_Oxidored"/>
</dbReference>
<dbReference type="InterPro" id="IPR036188">
    <property type="entry name" value="FAD/NAD-bd_sf"/>
</dbReference>
<dbReference type="InterPro" id="IPR023753">
    <property type="entry name" value="FAD/NAD-binding_dom"/>
</dbReference>
<dbReference type="InterPro" id="IPR016156">
    <property type="entry name" value="FAD/NAD-linked_Rdtase_dimer_sf"/>
</dbReference>
<dbReference type="InterPro" id="IPR006258">
    <property type="entry name" value="Lipoamide_DH"/>
</dbReference>
<dbReference type="InterPro" id="IPR001100">
    <property type="entry name" value="Pyr_nuc-diS_OxRdtase"/>
</dbReference>
<dbReference type="InterPro" id="IPR004099">
    <property type="entry name" value="Pyr_nucl-diS_OxRdtase_dimer"/>
</dbReference>
<dbReference type="InterPro" id="IPR012999">
    <property type="entry name" value="Pyr_OxRdtase_I_AS"/>
</dbReference>
<dbReference type="NCBIfam" id="TIGR01350">
    <property type="entry name" value="lipoamide_DH"/>
    <property type="match status" value="1"/>
</dbReference>
<dbReference type="PANTHER" id="PTHR22912:SF160">
    <property type="entry name" value="DIHYDROLIPOYL DEHYDROGENASE"/>
    <property type="match status" value="1"/>
</dbReference>
<dbReference type="PANTHER" id="PTHR22912">
    <property type="entry name" value="DISULFIDE OXIDOREDUCTASE"/>
    <property type="match status" value="1"/>
</dbReference>
<dbReference type="Pfam" id="PF07992">
    <property type="entry name" value="Pyr_redox_2"/>
    <property type="match status" value="1"/>
</dbReference>
<dbReference type="Pfam" id="PF02852">
    <property type="entry name" value="Pyr_redox_dim"/>
    <property type="match status" value="1"/>
</dbReference>
<dbReference type="PIRSF" id="PIRSF000350">
    <property type="entry name" value="Mercury_reductase_MerA"/>
    <property type="match status" value="1"/>
</dbReference>
<dbReference type="PRINTS" id="PR00368">
    <property type="entry name" value="FADPNR"/>
</dbReference>
<dbReference type="PRINTS" id="PR00411">
    <property type="entry name" value="PNDRDTASEI"/>
</dbReference>
<dbReference type="SUPFAM" id="SSF51905">
    <property type="entry name" value="FAD/NAD(P)-binding domain"/>
    <property type="match status" value="1"/>
</dbReference>
<dbReference type="SUPFAM" id="SSF55424">
    <property type="entry name" value="FAD/NAD-linked reductases, dimerisation (C-terminal) domain"/>
    <property type="match status" value="1"/>
</dbReference>
<dbReference type="PROSITE" id="PS00076">
    <property type="entry name" value="PYRIDINE_REDOX_1"/>
    <property type="match status" value="1"/>
</dbReference>
<comment type="function">
    <text evidence="1">The branched-chain alpha-keto dehydrogenase complex catalyzes the overall conversion of alpha-keto acids to acyl-CoA and CO(2). It contains multiple copies of 3 enzymatic components: branched-chain alpha-keto acid decarboxylase (E1), lipoamide acyltransferase (E2) and lipoamide dehydrogenase (E3) (By similarity).</text>
</comment>
<comment type="catalytic activity">
    <reaction evidence="2">
        <text>N(6)-[(R)-dihydrolipoyl]-L-lysyl-[protein] + NAD(+) = N(6)-[(R)-lipoyl]-L-lysyl-[protein] + NADH + H(+)</text>
        <dbReference type="Rhea" id="RHEA:15045"/>
        <dbReference type="Rhea" id="RHEA-COMP:10474"/>
        <dbReference type="Rhea" id="RHEA-COMP:10475"/>
        <dbReference type="ChEBI" id="CHEBI:15378"/>
        <dbReference type="ChEBI" id="CHEBI:57540"/>
        <dbReference type="ChEBI" id="CHEBI:57945"/>
        <dbReference type="ChEBI" id="CHEBI:83099"/>
        <dbReference type="ChEBI" id="CHEBI:83100"/>
        <dbReference type="EC" id="1.8.1.4"/>
    </reaction>
</comment>
<comment type="cofactor">
    <cofactor evidence="2">
        <name>FAD</name>
        <dbReference type="ChEBI" id="CHEBI:57692"/>
    </cofactor>
    <text evidence="2">Binds 1 FAD per subunit.</text>
</comment>
<comment type="subunit">
    <text evidence="2">Homodimer.</text>
</comment>
<comment type="subcellular location">
    <subcellularLocation>
        <location evidence="1">Cytoplasm</location>
    </subcellularLocation>
</comment>
<comment type="miscellaneous">
    <text evidence="2">The active site is a redox-active disulfide bond.</text>
</comment>
<comment type="similarity">
    <text evidence="3">Belongs to the class-I pyridine nucleotide-disulfide oxidoreductase family.</text>
</comment>
<organism>
    <name type="scientific">Pseudomonas aeruginosa (strain ATCC 15692 / DSM 22644 / CIP 104116 / JCM 14847 / LMG 12228 / 1C / PRS 101 / PAO1)</name>
    <dbReference type="NCBI Taxonomy" id="208964"/>
    <lineage>
        <taxon>Bacteria</taxon>
        <taxon>Pseudomonadati</taxon>
        <taxon>Pseudomonadota</taxon>
        <taxon>Gammaproteobacteria</taxon>
        <taxon>Pseudomonadales</taxon>
        <taxon>Pseudomonadaceae</taxon>
        <taxon>Pseudomonas</taxon>
    </lineage>
</organism>